<name>GDF8_HORSE</name>
<sequence>MQKLQISVYIYLFVLILAGPVDLNENSEQKENVEKEGLCNACTWRQNTKSSRIEAIKIQILSKLRLETAPNISKDAIRQLLPKAPPLRELIDQYDVQRDDSSDGSLEDDDYHATTETIITMPTESDLLMQVEGKPKCCFFKFSSKIQYNKVVKAQLWIYLRPVKTPTTVFVQILRLIKPMKDGTRYTGIRSLKLDMNPGAGIWQSIDVKTVLQNWLKQPESNLGIEIKALDENGHDLAVTFPRPGEDGLNPFLEVKVTDTPKRSRRDFGLDCDEHSTESRCCRYPLTVDFEAFGWDWIIAPKRYKANYCSGECEFVFLQKYPHTHLVHQANPRGSAGPCCTPTKMSPINMLYFNGKEQIIYGKIPAMVVDRCGCS</sequence>
<evidence type="ECO:0000250" key="1">
    <source>
        <dbReference type="UniProtKB" id="O08689"/>
    </source>
</evidence>
<evidence type="ECO:0000250" key="2">
    <source>
        <dbReference type="UniProtKB" id="O14793"/>
    </source>
</evidence>
<evidence type="ECO:0000255" key="3"/>
<evidence type="ECO:0000305" key="4"/>
<accession>Q9GM97</accession>
<accession>Q5MBA9</accession>
<protein>
    <recommendedName>
        <fullName>Growth/differentiation factor 8</fullName>
        <shortName>GDF-8</shortName>
    </recommendedName>
    <alternativeName>
        <fullName>Myostatin</fullName>
    </alternativeName>
</protein>
<proteinExistence type="evidence at transcript level"/>
<gene>
    <name type="primary">MSTN</name>
    <name type="synonym">GDF8</name>
</gene>
<keyword id="KW-0165">Cleavage on pair of basic residues</keyword>
<keyword id="KW-0202">Cytokine</keyword>
<keyword id="KW-1015">Disulfide bond</keyword>
<keyword id="KW-0325">Glycoprotein</keyword>
<keyword id="KW-0339">Growth factor</keyword>
<keyword id="KW-0358">Heparin-binding</keyword>
<keyword id="KW-1185">Reference proteome</keyword>
<keyword id="KW-0964">Secreted</keyword>
<keyword id="KW-0732">Signal</keyword>
<organism>
    <name type="scientific">Equus caballus</name>
    <name type="common">Horse</name>
    <dbReference type="NCBI Taxonomy" id="9796"/>
    <lineage>
        <taxon>Eukaryota</taxon>
        <taxon>Metazoa</taxon>
        <taxon>Chordata</taxon>
        <taxon>Craniata</taxon>
        <taxon>Vertebrata</taxon>
        <taxon>Euteleostomi</taxon>
        <taxon>Mammalia</taxon>
        <taxon>Eutheria</taxon>
        <taxon>Laurasiatheria</taxon>
        <taxon>Perissodactyla</taxon>
        <taxon>Equidae</taxon>
        <taxon>Equus</taxon>
    </lineage>
</organism>
<feature type="signal peptide" evidence="3">
    <location>
        <begin position="1"/>
        <end position="18"/>
    </location>
</feature>
<feature type="propeptide" id="PRO_0000033948" evidence="3">
    <location>
        <begin position="19"/>
        <end position="266"/>
    </location>
</feature>
<feature type="chain" id="PRO_0000033949" description="Growth/differentiation factor 8">
    <location>
        <begin position="267"/>
        <end position="375"/>
    </location>
</feature>
<feature type="site" description="Cleavage" evidence="1">
    <location>
        <begin position="98"/>
        <end position="99"/>
    </location>
</feature>
<feature type="glycosylation site" description="N-linked (GlcNAc...) asparagine" evidence="3">
    <location>
        <position position="71"/>
    </location>
</feature>
<feature type="disulfide bond" evidence="2">
    <location>
        <begin position="272"/>
        <end position="282"/>
    </location>
</feature>
<feature type="disulfide bond" evidence="2">
    <location>
        <begin position="281"/>
        <end position="340"/>
    </location>
</feature>
<feature type="disulfide bond" evidence="2">
    <location>
        <begin position="309"/>
        <end position="372"/>
    </location>
</feature>
<feature type="disulfide bond" evidence="2">
    <location>
        <begin position="313"/>
        <end position="374"/>
    </location>
</feature>
<feature type="disulfide bond" description="Interchain" evidence="2">
    <location>
        <position position="339"/>
    </location>
</feature>
<feature type="sequence conflict" description="In Ref. 2; AAW02953." evidence="4" ref="2">
    <original>Y</original>
    <variation>H</variation>
    <location>
        <position position="148"/>
    </location>
</feature>
<feature type="sequence conflict" description="In Ref. 2; AAW02953." evidence="4" ref="2">
    <original>S</original>
    <variation>F</variation>
    <location>
        <position position="191"/>
    </location>
</feature>
<feature type="sequence conflict" description="In Ref. 2; AAW02953." evidence="4" ref="2">
    <original>L</original>
    <variation>P</variation>
    <location>
        <position position="270"/>
    </location>
</feature>
<reference key="1">
    <citation type="submission" date="1999-10" db="EMBL/GenBank/DDBJ databases">
        <title>Molecular cloning of equine myostatin cDNA and serum level of myostatin in horse.</title>
        <authorList>
            <person name="Hosoyama T."/>
            <person name="Yamanouchi K."/>
            <person name="Tojo H."/>
            <person name="Tachi C."/>
        </authorList>
    </citation>
    <scope>NUCLEOTIDE SEQUENCE [MRNA]</scope>
</reference>
<reference key="2">
    <citation type="submission" date="2004-11" db="EMBL/GenBank/DDBJ databases">
        <authorList>
            <person name="Tang H."/>
            <person name="Wang Q."/>
            <person name="Dugarjav M."/>
        </authorList>
    </citation>
    <scope>NUCLEOTIDE SEQUENCE [GENOMIC DNA]</scope>
</reference>
<comment type="function">
    <text evidence="1">Acts specifically as a negative regulator of skeletal muscle growth.</text>
</comment>
<comment type="subunit">
    <text evidence="1">Homodimer; disulfide-linked. Interacts with WFIKKN2, leading to inhibit its activity. Interacts with FSTL3.</text>
</comment>
<comment type="subcellular location">
    <subcellularLocation>
        <location evidence="1">Secreted</location>
    </subcellularLocation>
</comment>
<comment type="PTM">
    <text evidence="1">Synthesized as large precursor molecule that undergoes proteolytic cleavage to generate an N-terminal propeptide and a disulfide linked C-terminal dimer, which is the biologically active molecule. The circulating form consists of a latent complex of the C-terminal dimer and other proteins, including its propeptide, which maintain the C-terminal dimer in a latent, inactive state. Ligand activation requires additional cleavage of the prodomain by a tolloid-like metalloproteinase.</text>
</comment>
<comment type="similarity">
    <text evidence="4">Belongs to the TGF-beta family.</text>
</comment>
<dbReference type="EMBL" id="AB033541">
    <property type="protein sequence ID" value="BAB16046.1"/>
    <property type="molecule type" value="mRNA"/>
</dbReference>
<dbReference type="EMBL" id="AY840554">
    <property type="protein sequence ID" value="AAW02953.2"/>
    <property type="molecule type" value="Genomic_DNA"/>
</dbReference>
<dbReference type="RefSeq" id="NP_001075286.1">
    <property type="nucleotide sequence ID" value="NM_001081817.1"/>
</dbReference>
<dbReference type="SMR" id="Q9GM97"/>
<dbReference type="FunCoup" id="Q9GM97">
    <property type="interactions" value="33"/>
</dbReference>
<dbReference type="STRING" id="9796.ENSECAP00000018852"/>
<dbReference type="GlyCosmos" id="Q9GM97">
    <property type="glycosylation" value="1 site, No reported glycans"/>
</dbReference>
<dbReference type="PaxDb" id="9796-ENSECAP00000018852"/>
<dbReference type="GeneID" id="100033832"/>
<dbReference type="KEGG" id="ecb:100033832"/>
<dbReference type="CTD" id="2660"/>
<dbReference type="InParanoid" id="Q9GM97"/>
<dbReference type="OrthoDB" id="5948587at2759"/>
<dbReference type="Proteomes" id="UP000002281">
    <property type="component" value="Unplaced"/>
</dbReference>
<dbReference type="GO" id="GO:0005615">
    <property type="term" value="C:extracellular space"/>
    <property type="evidence" value="ECO:0000318"/>
    <property type="project" value="GO_Central"/>
</dbReference>
<dbReference type="GO" id="GO:0005125">
    <property type="term" value="F:cytokine activity"/>
    <property type="evidence" value="ECO:0000318"/>
    <property type="project" value="GO_Central"/>
</dbReference>
<dbReference type="GO" id="GO:0008083">
    <property type="term" value="F:growth factor activity"/>
    <property type="evidence" value="ECO:0007669"/>
    <property type="project" value="UniProtKB-KW"/>
</dbReference>
<dbReference type="GO" id="GO:0008201">
    <property type="term" value="F:heparin binding"/>
    <property type="evidence" value="ECO:0007669"/>
    <property type="project" value="UniProtKB-KW"/>
</dbReference>
<dbReference type="GO" id="GO:0042802">
    <property type="term" value="F:identical protein binding"/>
    <property type="evidence" value="ECO:0000250"/>
    <property type="project" value="UniProtKB"/>
</dbReference>
<dbReference type="GO" id="GO:0014839">
    <property type="term" value="P:myoblast migration involved in skeletal muscle regeneration"/>
    <property type="evidence" value="ECO:0000250"/>
    <property type="project" value="UniProtKB"/>
</dbReference>
<dbReference type="GO" id="GO:2000818">
    <property type="term" value="P:negative regulation of myoblast proliferation"/>
    <property type="evidence" value="ECO:0000250"/>
    <property type="project" value="AgBase"/>
</dbReference>
<dbReference type="GO" id="GO:1902725">
    <property type="term" value="P:negative regulation of satellite cell differentiation"/>
    <property type="evidence" value="ECO:0000250"/>
    <property type="project" value="AgBase"/>
</dbReference>
<dbReference type="GO" id="GO:1902723">
    <property type="term" value="P:negative regulation of skeletal muscle satellite cell proliferation"/>
    <property type="evidence" value="ECO:0000250"/>
    <property type="project" value="AgBase"/>
</dbReference>
<dbReference type="GO" id="GO:0010592">
    <property type="term" value="P:positive regulation of lamellipodium assembly"/>
    <property type="evidence" value="ECO:0000250"/>
    <property type="project" value="UniProtKB"/>
</dbReference>
<dbReference type="GO" id="GO:0010759">
    <property type="term" value="P:positive regulation of macrophage chemotaxis"/>
    <property type="evidence" value="ECO:0000250"/>
    <property type="project" value="UniProtKB"/>
</dbReference>
<dbReference type="GO" id="GO:0048741">
    <property type="term" value="P:skeletal muscle fiber development"/>
    <property type="evidence" value="ECO:0000315"/>
    <property type="project" value="AgBase"/>
</dbReference>
<dbReference type="CDD" id="cd19388">
    <property type="entry name" value="TGF_beta_GDF8"/>
    <property type="match status" value="1"/>
</dbReference>
<dbReference type="FunFam" id="2.60.120.970:FF:000001">
    <property type="entry name" value="Growth/differentiation factor 8"/>
    <property type="match status" value="1"/>
</dbReference>
<dbReference type="FunFam" id="2.10.90.10:FF:000006">
    <property type="entry name" value="growth/differentiation factor 8"/>
    <property type="match status" value="1"/>
</dbReference>
<dbReference type="Gene3D" id="2.60.120.970">
    <property type="match status" value="1"/>
</dbReference>
<dbReference type="Gene3D" id="2.10.90.10">
    <property type="entry name" value="Cystine-knot cytokines"/>
    <property type="match status" value="1"/>
</dbReference>
<dbReference type="InterPro" id="IPR029034">
    <property type="entry name" value="Cystine-knot_cytokine"/>
</dbReference>
<dbReference type="InterPro" id="IPR001839">
    <property type="entry name" value="TGF-b_C"/>
</dbReference>
<dbReference type="InterPro" id="IPR001111">
    <property type="entry name" value="TGF-b_propeptide"/>
</dbReference>
<dbReference type="InterPro" id="IPR015615">
    <property type="entry name" value="TGF-beta-rel"/>
</dbReference>
<dbReference type="InterPro" id="IPR017948">
    <property type="entry name" value="TGFb_CS"/>
</dbReference>
<dbReference type="PANTHER" id="PTHR11848:SF150">
    <property type="entry name" value="GROWTH_DIFFERENTIATION FACTOR 8"/>
    <property type="match status" value="1"/>
</dbReference>
<dbReference type="PANTHER" id="PTHR11848">
    <property type="entry name" value="TGF-BETA FAMILY"/>
    <property type="match status" value="1"/>
</dbReference>
<dbReference type="Pfam" id="PF00019">
    <property type="entry name" value="TGF_beta"/>
    <property type="match status" value="1"/>
</dbReference>
<dbReference type="Pfam" id="PF00688">
    <property type="entry name" value="TGFb_propeptide"/>
    <property type="match status" value="1"/>
</dbReference>
<dbReference type="SMART" id="SM00204">
    <property type="entry name" value="TGFB"/>
    <property type="match status" value="1"/>
</dbReference>
<dbReference type="SUPFAM" id="SSF57501">
    <property type="entry name" value="Cystine-knot cytokines"/>
    <property type="match status" value="1"/>
</dbReference>
<dbReference type="PROSITE" id="PS00250">
    <property type="entry name" value="TGF_BETA_1"/>
    <property type="match status" value="1"/>
</dbReference>
<dbReference type="PROSITE" id="PS51362">
    <property type="entry name" value="TGF_BETA_2"/>
    <property type="match status" value="1"/>
</dbReference>